<name>ATG14_PYRO7</name>
<keyword id="KW-0072">Autophagy</keyword>
<keyword id="KW-0175">Coiled coil</keyword>
<keyword id="KW-0472">Membrane</keyword>
<keyword id="KW-0653">Protein transport</keyword>
<keyword id="KW-1185">Reference proteome</keyword>
<keyword id="KW-0813">Transport</keyword>
<keyword id="KW-0926">Vacuole</keyword>
<gene>
    <name evidence="4" type="primary">ATG14</name>
    <name type="ORF">MGG_03698</name>
</gene>
<proteinExistence type="evidence at transcript level"/>
<sequence>MSCYICGRGHHAQRLPFLCPIDARNRLYEGRLAQAHTLIDSDRLKQQTNALIEQPPPTAAKASRSSPAARKAAIDDWASKHQEAIDRTAEIIAQADRLKAEVEAARQEIRQRKKTLARRKSDLAEAADGIEEKRKKQLDKVKDNIAATRADWDLVHESTASNRAFLCMEAARLYGLRRLKKGSSVKYELGGAEVVDLHALTGASPQAITISFSHIVHILNRACQYLAIRLPAEIILPHADYPRPAILSITSSYSYNHDDIPYPGTSDQQSELNTLPQDDLFYQRLPRARPLFIDRPLPVLAKEDPAMYSLFIEGVALLAHDVAWACCSQGVPVGPEDVLHVGRNLYNLLIGNQLLRGVSSNDGGNSTPQMGRYSHGAVHSYLGSAEGSDLVRTFRLPNPIKLADRLKSKLSSDAPNPDWELLEDDAWT</sequence>
<reference key="1">
    <citation type="journal article" date="2005" name="Nature">
        <title>The genome sequence of the rice blast fungus Magnaporthe grisea.</title>
        <authorList>
            <person name="Dean R.A."/>
            <person name="Talbot N.J."/>
            <person name="Ebbole D.J."/>
            <person name="Farman M.L."/>
            <person name="Mitchell T.K."/>
            <person name="Orbach M.J."/>
            <person name="Thon M.R."/>
            <person name="Kulkarni R."/>
            <person name="Xu J.-R."/>
            <person name="Pan H."/>
            <person name="Read N.D."/>
            <person name="Lee Y.-H."/>
            <person name="Carbone I."/>
            <person name="Brown D."/>
            <person name="Oh Y.Y."/>
            <person name="Donofrio N."/>
            <person name="Jeong J.S."/>
            <person name="Soanes D.M."/>
            <person name="Djonovic S."/>
            <person name="Kolomiets E."/>
            <person name="Rehmeyer C."/>
            <person name="Li W."/>
            <person name="Harding M."/>
            <person name="Kim S."/>
            <person name="Lebrun M.-H."/>
            <person name="Bohnert H."/>
            <person name="Coughlan S."/>
            <person name="Butler J."/>
            <person name="Calvo S.E."/>
            <person name="Ma L.-J."/>
            <person name="Nicol R."/>
            <person name="Purcell S."/>
            <person name="Nusbaum C."/>
            <person name="Galagan J.E."/>
            <person name="Birren B.W."/>
        </authorList>
    </citation>
    <scope>NUCLEOTIDE SEQUENCE [LARGE SCALE GENOMIC DNA]</scope>
    <source>
        <strain>70-15 / ATCC MYA-4617 / FGSC 8958</strain>
    </source>
</reference>
<reference key="2">
    <citation type="journal article" date="2017" name="Sci. Rep.">
        <title>Autophagy-related protein MoAtg14 is involved in differentiation, development and pathogenicity in the rice blast fungus Magnaporthe oryzae.</title>
        <authorList>
            <person name="Liu X.H."/>
            <person name="Zhao Y.H."/>
            <person name="Zhu X.M."/>
            <person name="Zeng X.Q."/>
            <person name="Huang L.Y."/>
            <person name="Dong B."/>
            <person name="Su Z.Z."/>
            <person name="Wang Y."/>
            <person name="Lu J.P."/>
            <person name="Lin F.C."/>
        </authorList>
    </citation>
    <scope>IDENTIFICATION</scope>
    <scope>INDUCTION</scope>
    <scope>FUNCTION</scope>
    <scope>DISRUPTION PHENOTYPE</scope>
    <scope>SUBCELLULAR LOCATION</scope>
    <scope>DOMAIN</scope>
</reference>
<feature type="chain" id="PRO_0000443912" description="Autophagy-related protein 14">
    <location>
        <begin position="1"/>
        <end position="428"/>
    </location>
</feature>
<feature type="coiled-coil region" evidence="2">
    <location>
        <begin position="82"/>
        <end position="143"/>
    </location>
</feature>
<accession>G4N6P7</accession>
<evidence type="ECO:0000250" key="1">
    <source>
        <dbReference type="UniProtKB" id="P38270"/>
    </source>
</evidence>
<evidence type="ECO:0000255" key="2"/>
<evidence type="ECO:0000269" key="3">
    <source>
    </source>
</evidence>
<evidence type="ECO:0000303" key="4">
    <source>
    </source>
</evidence>
<evidence type="ECO:0000305" key="5"/>
<dbReference type="EMBL" id="CM001234">
    <property type="protein sequence ID" value="EHA49864.1"/>
    <property type="molecule type" value="Genomic_DNA"/>
</dbReference>
<dbReference type="RefSeq" id="XP_003716183.1">
    <property type="nucleotide sequence ID" value="XM_003716135.1"/>
</dbReference>
<dbReference type="SMR" id="G4N6P7"/>
<dbReference type="EnsemblFungi" id="MGG_03698T0">
    <property type="protein sequence ID" value="MGG_03698T0"/>
    <property type="gene ID" value="MGG_03698"/>
</dbReference>
<dbReference type="GeneID" id="2676764"/>
<dbReference type="KEGG" id="mgr:MGG_03698"/>
<dbReference type="VEuPathDB" id="FungiDB:MGG_03698"/>
<dbReference type="eggNOG" id="ENOG502S2VB">
    <property type="taxonomic scope" value="Eukaryota"/>
</dbReference>
<dbReference type="HOGENOM" id="CLU_021590_1_0_1"/>
<dbReference type="InParanoid" id="G4N6P7"/>
<dbReference type="OMA" id="HYLSIRL"/>
<dbReference type="OrthoDB" id="16772at2759"/>
<dbReference type="PHI-base" id="PHI:6902"/>
<dbReference type="Proteomes" id="UP000009058">
    <property type="component" value="Chromosome 4"/>
</dbReference>
<dbReference type="GO" id="GO:0005768">
    <property type="term" value="C:endosome"/>
    <property type="evidence" value="ECO:0007669"/>
    <property type="project" value="TreeGrafter"/>
</dbReference>
<dbReference type="GO" id="GO:0000323">
    <property type="term" value="C:lytic vacuole"/>
    <property type="evidence" value="ECO:0007669"/>
    <property type="project" value="TreeGrafter"/>
</dbReference>
<dbReference type="GO" id="GO:0034045">
    <property type="term" value="C:phagophore assembly site membrane"/>
    <property type="evidence" value="ECO:0007669"/>
    <property type="project" value="UniProtKB-SubCell"/>
</dbReference>
<dbReference type="GO" id="GO:0032991">
    <property type="term" value="C:protein-containing complex"/>
    <property type="evidence" value="ECO:0007669"/>
    <property type="project" value="UniProtKB-ARBA"/>
</dbReference>
<dbReference type="GO" id="GO:0005774">
    <property type="term" value="C:vacuolar membrane"/>
    <property type="evidence" value="ECO:0007669"/>
    <property type="project" value="UniProtKB-SubCell"/>
</dbReference>
<dbReference type="GO" id="GO:0000149">
    <property type="term" value="F:SNARE binding"/>
    <property type="evidence" value="ECO:0007669"/>
    <property type="project" value="TreeGrafter"/>
</dbReference>
<dbReference type="GO" id="GO:0006914">
    <property type="term" value="P:autophagy"/>
    <property type="evidence" value="ECO:0007669"/>
    <property type="project" value="UniProtKB-KW"/>
</dbReference>
<dbReference type="GO" id="GO:0015031">
    <property type="term" value="P:protein transport"/>
    <property type="evidence" value="ECO:0007669"/>
    <property type="project" value="UniProtKB-KW"/>
</dbReference>
<dbReference type="GO" id="GO:0035493">
    <property type="term" value="P:SNARE complex assembly"/>
    <property type="evidence" value="ECO:0007669"/>
    <property type="project" value="TreeGrafter"/>
</dbReference>
<dbReference type="InterPro" id="IPR018791">
    <property type="entry name" value="UV_resistance/autophagy_Atg14"/>
</dbReference>
<dbReference type="PANTHER" id="PTHR15157:SF13">
    <property type="entry name" value="AUTOPHAGY-RELATED PROTEIN 14"/>
    <property type="match status" value="1"/>
</dbReference>
<dbReference type="PANTHER" id="PTHR15157">
    <property type="entry name" value="UV RADIATION RESISTANCE-ASSOCIATED GENE PROTEIN"/>
    <property type="match status" value="1"/>
</dbReference>
<dbReference type="Pfam" id="PF10186">
    <property type="entry name" value="ATG14"/>
    <property type="match status" value="1"/>
</dbReference>
<comment type="function">
    <text evidence="1 3">Required for cytoplasm to vacuole transport (Cvt) and autophagy as a part of the autophagy-specific VPS34 PI3-kinase complex I (PubMed:28067330). This complex is essential to recruit the ATG8-phosphatidylinositol conjugate and the ATG12-ATG5 conjugate to the pre-autophagosomal structure (By similarity). ATG14 mediates the specific binding of the VPS34 PI3-kinase complex I to the preautophagosomal structure (PAS) (By similarity). Plays a crucial role in hyphal development, conidiogenesis and pathogenicity (PubMed:28067330). Also required for glycogen mobilization, quantity of lipid bodies, and the turgor pressure of appressoria (PubMed:28067330).</text>
</comment>
<comment type="subunit">
    <text evidence="1">Component of the autophagy-specific VPS34 PI3-kinase complex I (By similarity).</text>
</comment>
<comment type="subcellular location">
    <subcellularLocation>
        <location evidence="3">Preautophagosomal structure membrane</location>
        <topology evidence="1">Peripheral membrane protein</topology>
    </subcellularLocation>
    <subcellularLocation>
        <location evidence="1">Vacuole membrane</location>
        <topology evidence="1">Peripheral membrane protein</topology>
    </subcellularLocation>
</comment>
<comment type="induction">
    <text evidence="3">Expression is hihghly increased in nitrogen starved hyphae, as well as in invasive hyphae (PubMed:28067330).</text>
</comment>
<comment type="domain">
    <text evidence="3">The coiled-Coil domain is essential for autophagy (PubMed:28067330).</text>
</comment>
<comment type="disruption phenotype">
    <text evidence="3">Leads to the formation of sparse hyphae with necrotic centrality, and a reduced number of condia (PubMed:28067330). Fails to penetrate both hosts in infection assays with the two susceptible hosts rice and barley (PubMed:28067330). Also leads to delayed mobilization, reduced lipid bodies and lower turgor pressure of the appressoria (PubMed:28067330). Impairs the delivery of ATG8 to the vacuoles upon nitrogen starvation (PubMed:28067330).</text>
</comment>
<comment type="similarity">
    <text evidence="5">Belongs to the ATG14 family.</text>
</comment>
<protein>
    <recommendedName>
        <fullName evidence="4">Autophagy-related protein 14</fullName>
    </recommendedName>
</protein>
<organism>
    <name type="scientific">Pyricularia oryzae (strain 70-15 / ATCC MYA-4617 / FGSC 8958)</name>
    <name type="common">Rice blast fungus</name>
    <name type="synonym">Magnaporthe oryzae</name>
    <dbReference type="NCBI Taxonomy" id="242507"/>
    <lineage>
        <taxon>Eukaryota</taxon>
        <taxon>Fungi</taxon>
        <taxon>Dikarya</taxon>
        <taxon>Ascomycota</taxon>
        <taxon>Pezizomycotina</taxon>
        <taxon>Sordariomycetes</taxon>
        <taxon>Sordariomycetidae</taxon>
        <taxon>Magnaporthales</taxon>
        <taxon>Pyriculariaceae</taxon>
        <taxon>Pyricularia</taxon>
    </lineage>
</organism>